<accession>A3CYL9</accession>
<organism>
    <name type="scientific">Shewanella baltica (strain OS155 / ATCC BAA-1091)</name>
    <dbReference type="NCBI Taxonomy" id="325240"/>
    <lineage>
        <taxon>Bacteria</taxon>
        <taxon>Pseudomonadati</taxon>
        <taxon>Pseudomonadota</taxon>
        <taxon>Gammaproteobacteria</taxon>
        <taxon>Alteromonadales</taxon>
        <taxon>Shewanellaceae</taxon>
        <taxon>Shewanella</taxon>
    </lineage>
</organism>
<protein>
    <recommendedName>
        <fullName evidence="1">Adenosine deaminase</fullName>
        <ecNumber evidence="1">3.5.4.4</ecNumber>
    </recommendedName>
    <alternativeName>
        <fullName evidence="1">Adenosine aminohydrolase</fullName>
    </alternativeName>
</protein>
<gene>
    <name evidence="1" type="primary">add</name>
    <name type="ordered locus">Sbal_0046</name>
</gene>
<keyword id="KW-0378">Hydrolase</keyword>
<keyword id="KW-0479">Metal-binding</keyword>
<keyword id="KW-0546">Nucleotide metabolism</keyword>
<keyword id="KW-1185">Reference proteome</keyword>
<keyword id="KW-0862">Zinc</keyword>
<proteinExistence type="inferred from homology"/>
<reference key="1">
    <citation type="submission" date="2007-02" db="EMBL/GenBank/DDBJ databases">
        <title>Complete sequence of chromosome of Shewanella baltica OS155.</title>
        <authorList>
            <consortium name="US DOE Joint Genome Institute"/>
            <person name="Copeland A."/>
            <person name="Lucas S."/>
            <person name="Lapidus A."/>
            <person name="Barry K."/>
            <person name="Detter J.C."/>
            <person name="Glavina del Rio T."/>
            <person name="Hammon N."/>
            <person name="Israni S."/>
            <person name="Dalin E."/>
            <person name="Tice H."/>
            <person name="Pitluck S."/>
            <person name="Sims D.R."/>
            <person name="Brettin T."/>
            <person name="Bruce D."/>
            <person name="Han C."/>
            <person name="Tapia R."/>
            <person name="Brainard J."/>
            <person name="Schmutz J."/>
            <person name="Larimer F."/>
            <person name="Land M."/>
            <person name="Hauser L."/>
            <person name="Kyrpides N."/>
            <person name="Mikhailova N."/>
            <person name="Brettar I."/>
            <person name="Klappenbach J."/>
            <person name="Konstantinidis K."/>
            <person name="Rodrigues J."/>
            <person name="Tiedje J."/>
            <person name="Richardson P."/>
        </authorList>
    </citation>
    <scope>NUCLEOTIDE SEQUENCE [LARGE SCALE GENOMIC DNA]</scope>
    <source>
        <strain>OS155 / ATCC BAA-1091</strain>
    </source>
</reference>
<name>ADD_SHEB5</name>
<dbReference type="EC" id="3.5.4.4" evidence="1"/>
<dbReference type="EMBL" id="CP000563">
    <property type="protein sequence ID" value="ABN59582.1"/>
    <property type="molecule type" value="Genomic_DNA"/>
</dbReference>
<dbReference type="RefSeq" id="WP_011845364.1">
    <property type="nucleotide sequence ID" value="NC_009052.1"/>
</dbReference>
<dbReference type="SMR" id="A3CYL9"/>
<dbReference type="STRING" id="325240.Sbal_0046"/>
<dbReference type="KEGG" id="sbl:Sbal_0046"/>
<dbReference type="HOGENOM" id="CLU_039228_0_2_6"/>
<dbReference type="OrthoDB" id="105475at2"/>
<dbReference type="Proteomes" id="UP000001557">
    <property type="component" value="Chromosome"/>
</dbReference>
<dbReference type="GO" id="GO:0005829">
    <property type="term" value="C:cytosol"/>
    <property type="evidence" value="ECO:0007669"/>
    <property type="project" value="TreeGrafter"/>
</dbReference>
<dbReference type="GO" id="GO:0046936">
    <property type="term" value="F:2'-deoxyadenosine deaminase activity"/>
    <property type="evidence" value="ECO:0007669"/>
    <property type="project" value="RHEA"/>
</dbReference>
<dbReference type="GO" id="GO:0004000">
    <property type="term" value="F:adenosine deaminase activity"/>
    <property type="evidence" value="ECO:0007669"/>
    <property type="project" value="UniProtKB-UniRule"/>
</dbReference>
<dbReference type="GO" id="GO:0008270">
    <property type="term" value="F:zinc ion binding"/>
    <property type="evidence" value="ECO:0007669"/>
    <property type="project" value="UniProtKB-UniRule"/>
</dbReference>
<dbReference type="GO" id="GO:0006154">
    <property type="term" value="P:adenosine catabolic process"/>
    <property type="evidence" value="ECO:0007669"/>
    <property type="project" value="TreeGrafter"/>
</dbReference>
<dbReference type="GO" id="GO:0043103">
    <property type="term" value="P:hypoxanthine salvage"/>
    <property type="evidence" value="ECO:0007669"/>
    <property type="project" value="TreeGrafter"/>
</dbReference>
<dbReference type="GO" id="GO:0046103">
    <property type="term" value="P:inosine biosynthetic process"/>
    <property type="evidence" value="ECO:0007669"/>
    <property type="project" value="TreeGrafter"/>
</dbReference>
<dbReference type="GO" id="GO:0009117">
    <property type="term" value="P:nucleotide metabolic process"/>
    <property type="evidence" value="ECO:0007669"/>
    <property type="project" value="UniProtKB-KW"/>
</dbReference>
<dbReference type="GO" id="GO:0009168">
    <property type="term" value="P:purine ribonucleoside monophosphate biosynthetic process"/>
    <property type="evidence" value="ECO:0007669"/>
    <property type="project" value="UniProtKB-UniRule"/>
</dbReference>
<dbReference type="FunFam" id="3.20.20.140:FF:000009">
    <property type="entry name" value="Adenosine deaminase"/>
    <property type="match status" value="1"/>
</dbReference>
<dbReference type="Gene3D" id="3.20.20.140">
    <property type="entry name" value="Metal-dependent hydrolases"/>
    <property type="match status" value="1"/>
</dbReference>
<dbReference type="HAMAP" id="MF_00540">
    <property type="entry name" value="A_deaminase"/>
    <property type="match status" value="1"/>
</dbReference>
<dbReference type="InterPro" id="IPR028893">
    <property type="entry name" value="A_deaminase"/>
</dbReference>
<dbReference type="InterPro" id="IPR001365">
    <property type="entry name" value="A_deaminase_dom"/>
</dbReference>
<dbReference type="InterPro" id="IPR006330">
    <property type="entry name" value="Ado/ade_deaminase"/>
</dbReference>
<dbReference type="InterPro" id="IPR032466">
    <property type="entry name" value="Metal_Hydrolase"/>
</dbReference>
<dbReference type="NCBIfam" id="TIGR01430">
    <property type="entry name" value="aden_deam"/>
    <property type="match status" value="1"/>
</dbReference>
<dbReference type="NCBIfam" id="NF006846">
    <property type="entry name" value="PRK09358.1-1"/>
    <property type="match status" value="1"/>
</dbReference>
<dbReference type="PANTHER" id="PTHR11409">
    <property type="entry name" value="ADENOSINE DEAMINASE"/>
    <property type="match status" value="1"/>
</dbReference>
<dbReference type="PANTHER" id="PTHR11409:SF43">
    <property type="entry name" value="ADENOSINE DEAMINASE"/>
    <property type="match status" value="1"/>
</dbReference>
<dbReference type="Pfam" id="PF00962">
    <property type="entry name" value="A_deaminase"/>
    <property type="match status" value="1"/>
</dbReference>
<dbReference type="SUPFAM" id="SSF51556">
    <property type="entry name" value="Metallo-dependent hydrolases"/>
    <property type="match status" value="1"/>
</dbReference>
<evidence type="ECO:0000255" key="1">
    <source>
        <dbReference type="HAMAP-Rule" id="MF_00540"/>
    </source>
</evidence>
<feature type="chain" id="PRO_1000017694" description="Adenosine deaminase">
    <location>
        <begin position="1"/>
        <end position="331"/>
    </location>
</feature>
<feature type="active site" description="Proton donor" evidence="1">
    <location>
        <position position="200"/>
    </location>
</feature>
<feature type="binding site" evidence="1">
    <location>
        <position position="12"/>
    </location>
    <ligand>
        <name>Zn(2+)</name>
        <dbReference type="ChEBI" id="CHEBI:29105"/>
        <note>catalytic</note>
    </ligand>
</feature>
<feature type="binding site" evidence="1">
    <location>
        <position position="14"/>
    </location>
    <ligand>
        <name>substrate</name>
    </ligand>
</feature>
<feature type="binding site" evidence="1">
    <location>
        <position position="14"/>
    </location>
    <ligand>
        <name>Zn(2+)</name>
        <dbReference type="ChEBI" id="CHEBI:29105"/>
        <note>catalytic</note>
    </ligand>
</feature>
<feature type="binding site" evidence="1">
    <location>
        <position position="16"/>
    </location>
    <ligand>
        <name>substrate</name>
    </ligand>
</feature>
<feature type="binding site" evidence="1">
    <location>
        <position position="170"/>
    </location>
    <ligand>
        <name>substrate</name>
    </ligand>
</feature>
<feature type="binding site" evidence="1">
    <location>
        <position position="197"/>
    </location>
    <ligand>
        <name>Zn(2+)</name>
        <dbReference type="ChEBI" id="CHEBI:29105"/>
        <note>catalytic</note>
    </ligand>
</feature>
<feature type="binding site" evidence="1">
    <location>
        <position position="278"/>
    </location>
    <ligand>
        <name>Zn(2+)</name>
        <dbReference type="ChEBI" id="CHEBI:29105"/>
        <note>catalytic</note>
    </ligand>
</feature>
<feature type="binding site" evidence="1">
    <location>
        <position position="279"/>
    </location>
    <ligand>
        <name>substrate</name>
    </ligand>
</feature>
<feature type="site" description="Important for catalytic activity" evidence="1">
    <location>
        <position position="221"/>
    </location>
</feature>
<comment type="function">
    <text evidence="1">Catalyzes the hydrolytic deamination of adenosine and 2-deoxyadenosine.</text>
</comment>
<comment type="catalytic activity">
    <reaction evidence="1">
        <text>adenosine + H2O + H(+) = inosine + NH4(+)</text>
        <dbReference type="Rhea" id="RHEA:24408"/>
        <dbReference type="ChEBI" id="CHEBI:15377"/>
        <dbReference type="ChEBI" id="CHEBI:15378"/>
        <dbReference type="ChEBI" id="CHEBI:16335"/>
        <dbReference type="ChEBI" id="CHEBI:17596"/>
        <dbReference type="ChEBI" id="CHEBI:28938"/>
        <dbReference type="EC" id="3.5.4.4"/>
    </reaction>
    <physiologicalReaction direction="left-to-right" evidence="1">
        <dbReference type="Rhea" id="RHEA:24409"/>
    </physiologicalReaction>
</comment>
<comment type="catalytic activity">
    <reaction evidence="1">
        <text>2'-deoxyadenosine + H2O + H(+) = 2'-deoxyinosine + NH4(+)</text>
        <dbReference type="Rhea" id="RHEA:28190"/>
        <dbReference type="ChEBI" id="CHEBI:15377"/>
        <dbReference type="ChEBI" id="CHEBI:15378"/>
        <dbReference type="ChEBI" id="CHEBI:17256"/>
        <dbReference type="ChEBI" id="CHEBI:28938"/>
        <dbReference type="ChEBI" id="CHEBI:28997"/>
        <dbReference type="EC" id="3.5.4.4"/>
    </reaction>
    <physiologicalReaction direction="left-to-right" evidence="1">
        <dbReference type="Rhea" id="RHEA:28191"/>
    </physiologicalReaction>
</comment>
<comment type="cofactor">
    <cofactor evidence="1">
        <name>Zn(2+)</name>
        <dbReference type="ChEBI" id="CHEBI:29105"/>
    </cofactor>
    <text evidence="1">Binds 1 zinc ion per subunit.</text>
</comment>
<comment type="similarity">
    <text evidence="1">Belongs to the metallo-dependent hydrolases superfamily. Adenosine and AMP deaminases family. Adenosine deaminase subfamily.</text>
</comment>
<sequence length="331" mass="36218">MIDTSIPLVDLHRHLDGNVRVNTIWELGHQHGIALPADSLETLAPFVQIQGKETSLVAFLKKLDWMVGVLADLDAVKRVAYENVADAALSGLDYAELRFSPYYMAMNHKLPIEGVVEAVVDGVKAGLKDYNVKINLIGILSRSFGQAACTQELEGLLAHKQHLVAMDLAGDEMGFPGELFNEHFKRVRDADLAITAHAGEAAGSQSMWQAIQELGATRIGHGVNAIHDPKLMEYLAKHRIGIESCPTSNLHTSTVASYADHPFRTFMDAGVLINLNTDDPGVSAIDINHEYRIAKSELKLTDAELAQVQRNGVEMAFLSDSERKALYAAKV</sequence>